<keyword id="KW-0687">Ribonucleoprotein</keyword>
<keyword id="KW-0689">Ribosomal protein</keyword>
<feature type="chain" id="PRO_1000049679" description="Large ribosomal subunit protein bL19">
    <location>
        <begin position="1"/>
        <end position="115"/>
    </location>
</feature>
<evidence type="ECO:0000255" key="1">
    <source>
        <dbReference type="HAMAP-Rule" id="MF_00402"/>
    </source>
</evidence>
<evidence type="ECO:0000305" key="2"/>
<proteinExistence type="inferred from homology"/>
<reference key="1">
    <citation type="journal article" date="2006" name="J. Bacteriol.">
        <title>Chromosome rearrangement and diversification of Francisella tularensis revealed by the type B (OSU18) genome sequence.</title>
        <authorList>
            <person name="Petrosino J.F."/>
            <person name="Xiang Q."/>
            <person name="Karpathy S.E."/>
            <person name="Jiang H."/>
            <person name="Yerrapragada S."/>
            <person name="Liu Y."/>
            <person name="Gioia J."/>
            <person name="Hemphill L."/>
            <person name="Gonzalez A."/>
            <person name="Raghavan T.M."/>
            <person name="Uzman A."/>
            <person name="Fox G.E."/>
            <person name="Highlander S."/>
            <person name="Reichard M."/>
            <person name="Morton R.J."/>
            <person name="Clinkenbeard K.D."/>
            <person name="Weinstock G.M."/>
        </authorList>
    </citation>
    <scope>NUCLEOTIDE SEQUENCE [LARGE SCALE GENOMIC DNA]</scope>
    <source>
        <strain>OSU18</strain>
    </source>
</reference>
<comment type="function">
    <text evidence="1">This protein is located at the 30S-50S ribosomal subunit interface and may play a role in the structure and function of the aminoacyl-tRNA binding site.</text>
</comment>
<comment type="similarity">
    <text evidence="1">Belongs to the bacterial ribosomal protein bL19 family.</text>
</comment>
<protein>
    <recommendedName>
        <fullName evidence="1">Large ribosomal subunit protein bL19</fullName>
    </recommendedName>
    <alternativeName>
        <fullName evidence="2">50S ribosomal protein L19</fullName>
    </alternativeName>
</protein>
<sequence length="115" mass="13308">MKNKFVELVEKSQLRNDLPEFNPGDSITVNLWIKEGDKQRIQAFKGFVLRKRNRGLHSAFTVRKMSSGMGVERTFQTHSPLIDSIIVEKRADVRRAKLYYMRGLTGKAARIKEKV</sequence>
<dbReference type="EMBL" id="CP000437">
    <property type="protein sequence ID" value="ABI83450.1"/>
    <property type="molecule type" value="Genomic_DNA"/>
</dbReference>
<dbReference type="RefSeq" id="WP_003017210.1">
    <property type="nucleotide sequence ID" value="NC_017463.1"/>
</dbReference>
<dbReference type="SMR" id="Q0BKD4"/>
<dbReference type="KEGG" id="fth:FTH_1674"/>
<dbReference type="GO" id="GO:0022625">
    <property type="term" value="C:cytosolic large ribosomal subunit"/>
    <property type="evidence" value="ECO:0007669"/>
    <property type="project" value="TreeGrafter"/>
</dbReference>
<dbReference type="GO" id="GO:0003735">
    <property type="term" value="F:structural constituent of ribosome"/>
    <property type="evidence" value="ECO:0007669"/>
    <property type="project" value="InterPro"/>
</dbReference>
<dbReference type="GO" id="GO:0006412">
    <property type="term" value="P:translation"/>
    <property type="evidence" value="ECO:0007669"/>
    <property type="project" value="UniProtKB-UniRule"/>
</dbReference>
<dbReference type="FunFam" id="2.30.30.790:FF:000001">
    <property type="entry name" value="50S ribosomal protein L19"/>
    <property type="match status" value="1"/>
</dbReference>
<dbReference type="Gene3D" id="2.30.30.790">
    <property type="match status" value="1"/>
</dbReference>
<dbReference type="HAMAP" id="MF_00402">
    <property type="entry name" value="Ribosomal_bL19"/>
    <property type="match status" value="1"/>
</dbReference>
<dbReference type="InterPro" id="IPR001857">
    <property type="entry name" value="Ribosomal_bL19"/>
</dbReference>
<dbReference type="InterPro" id="IPR018257">
    <property type="entry name" value="Ribosomal_bL19_CS"/>
</dbReference>
<dbReference type="InterPro" id="IPR038657">
    <property type="entry name" value="Ribosomal_bL19_sf"/>
</dbReference>
<dbReference type="InterPro" id="IPR008991">
    <property type="entry name" value="Translation_prot_SH3-like_sf"/>
</dbReference>
<dbReference type="NCBIfam" id="TIGR01024">
    <property type="entry name" value="rplS_bact"/>
    <property type="match status" value="1"/>
</dbReference>
<dbReference type="PANTHER" id="PTHR15680:SF9">
    <property type="entry name" value="LARGE RIBOSOMAL SUBUNIT PROTEIN BL19M"/>
    <property type="match status" value="1"/>
</dbReference>
<dbReference type="PANTHER" id="PTHR15680">
    <property type="entry name" value="RIBOSOMAL PROTEIN L19"/>
    <property type="match status" value="1"/>
</dbReference>
<dbReference type="Pfam" id="PF01245">
    <property type="entry name" value="Ribosomal_L19"/>
    <property type="match status" value="1"/>
</dbReference>
<dbReference type="PIRSF" id="PIRSF002191">
    <property type="entry name" value="Ribosomal_L19"/>
    <property type="match status" value="1"/>
</dbReference>
<dbReference type="PRINTS" id="PR00061">
    <property type="entry name" value="RIBOSOMALL19"/>
</dbReference>
<dbReference type="SUPFAM" id="SSF50104">
    <property type="entry name" value="Translation proteins SH3-like domain"/>
    <property type="match status" value="1"/>
</dbReference>
<dbReference type="PROSITE" id="PS01015">
    <property type="entry name" value="RIBOSOMAL_L19"/>
    <property type="match status" value="1"/>
</dbReference>
<name>RL19_FRATO</name>
<gene>
    <name evidence="1" type="primary">rplS</name>
    <name type="ordered locus">FTH_1674</name>
</gene>
<accession>Q0BKD4</accession>
<organism>
    <name type="scientific">Francisella tularensis subsp. holarctica (strain OSU18)</name>
    <dbReference type="NCBI Taxonomy" id="393011"/>
    <lineage>
        <taxon>Bacteria</taxon>
        <taxon>Pseudomonadati</taxon>
        <taxon>Pseudomonadota</taxon>
        <taxon>Gammaproteobacteria</taxon>
        <taxon>Thiotrichales</taxon>
        <taxon>Francisellaceae</taxon>
        <taxon>Francisella</taxon>
    </lineage>
</organism>